<accession>A4QKG1</accession>
<protein>
    <recommendedName>
        <fullName evidence="1">NAD(P)H-quinone oxidoreductase subunit I, chloroplastic</fullName>
        <ecNumber evidence="1">7.1.1.-</ecNumber>
    </recommendedName>
    <alternativeName>
        <fullName evidence="1">NAD(P)H dehydrogenase subunit I</fullName>
        <shortName evidence="1">NDH subunit I</shortName>
    </alternativeName>
    <alternativeName>
        <fullName evidence="1">NADH-plastoquinone oxidoreductase subunit I</fullName>
    </alternativeName>
</protein>
<proteinExistence type="inferred from homology"/>
<sequence length="167" mass="19462">MLPMITGFMNYGQQTLRAARYIGQGFMITLSHTNRLPVTIQYPYEKLITSERFRGRIHFEFDKCIACEVCVRVCPIDLPVVDWKLETNIRKKRLLNYSIDFGICIFCGNCVEYCPTNCLSMTEEYEFSTYDRHELNYNQIALGRLPMSVIDDYTIRTILNSPQTING</sequence>
<organism>
    <name type="scientific">Barbarea verna</name>
    <name type="common">Land cress</name>
    <name type="synonym">Erysimum vernum</name>
    <dbReference type="NCBI Taxonomy" id="50458"/>
    <lineage>
        <taxon>Eukaryota</taxon>
        <taxon>Viridiplantae</taxon>
        <taxon>Streptophyta</taxon>
        <taxon>Embryophyta</taxon>
        <taxon>Tracheophyta</taxon>
        <taxon>Spermatophyta</taxon>
        <taxon>Magnoliopsida</taxon>
        <taxon>eudicotyledons</taxon>
        <taxon>Gunneridae</taxon>
        <taxon>Pentapetalae</taxon>
        <taxon>rosids</taxon>
        <taxon>malvids</taxon>
        <taxon>Brassicales</taxon>
        <taxon>Brassicaceae</taxon>
        <taxon>Cardamineae</taxon>
        <taxon>Barbarea</taxon>
    </lineage>
</organism>
<gene>
    <name evidence="1" type="primary">ndhI</name>
</gene>
<reference key="1">
    <citation type="submission" date="2007-03" db="EMBL/GenBank/DDBJ databases">
        <title>Sequencing analysis of Barbarea verna chloroplast DNA.</title>
        <authorList>
            <person name="Hosouchi T."/>
            <person name="Tsuruoka H."/>
            <person name="Kotani H."/>
        </authorList>
    </citation>
    <scope>NUCLEOTIDE SEQUENCE [LARGE SCALE GENOMIC DNA]</scope>
</reference>
<dbReference type="EC" id="7.1.1.-" evidence="1"/>
<dbReference type="EMBL" id="AP009370">
    <property type="protein sequence ID" value="BAF50166.1"/>
    <property type="molecule type" value="Genomic_DNA"/>
</dbReference>
<dbReference type="RefSeq" id="YP_001123341.1">
    <property type="nucleotide sequence ID" value="NC_009269.1"/>
</dbReference>
<dbReference type="SMR" id="A4QKG1"/>
<dbReference type="GeneID" id="4961899"/>
<dbReference type="GO" id="GO:0009535">
    <property type="term" value="C:chloroplast thylakoid membrane"/>
    <property type="evidence" value="ECO:0007669"/>
    <property type="project" value="UniProtKB-SubCell"/>
</dbReference>
<dbReference type="GO" id="GO:0051539">
    <property type="term" value="F:4 iron, 4 sulfur cluster binding"/>
    <property type="evidence" value="ECO:0007669"/>
    <property type="project" value="UniProtKB-KW"/>
</dbReference>
<dbReference type="GO" id="GO:0005506">
    <property type="term" value="F:iron ion binding"/>
    <property type="evidence" value="ECO:0007669"/>
    <property type="project" value="UniProtKB-UniRule"/>
</dbReference>
<dbReference type="GO" id="GO:0008137">
    <property type="term" value="F:NADH dehydrogenase (ubiquinone) activity"/>
    <property type="evidence" value="ECO:0007669"/>
    <property type="project" value="InterPro"/>
</dbReference>
<dbReference type="GO" id="GO:0048038">
    <property type="term" value="F:quinone binding"/>
    <property type="evidence" value="ECO:0007669"/>
    <property type="project" value="UniProtKB-KW"/>
</dbReference>
<dbReference type="GO" id="GO:0019684">
    <property type="term" value="P:photosynthesis, light reaction"/>
    <property type="evidence" value="ECO:0007669"/>
    <property type="project" value="UniProtKB-UniRule"/>
</dbReference>
<dbReference type="FunFam" id="3.30.70.3270:FF:000006">
    <property type="entry name" value="NAD(P)H-quinone oxidoreductase subunit I, chloroplastic"/>
    <property type="match status" value="1"/>
</dbReference>
<dbReference type="Gene3D" id="3.30.70.3270">
    <property type="match status" value="1"/>
</dbReference>
<dbReference type="HAMAP" id="MF_01351">
    <property type="entry name" value="NDH1_NuoI"/>
    <property type="match status" value="1"/>
</dbReference>
<dbReference type="InterPro" id="IPR017896">
    <property type="entry name" value="4Fe4S_Fe-S-bd"/>
</dbReference>
<dbReference type="InterPro" id="IPR017900">
    <property type="entry name" value="4Fe4S_Fe_S_CS"/>
</dbReference>
<dbReference type="InterPro" id="IPR010226">
    <property type="entry name" value="NADH_quinone_OxRdtase_chainI"/>
</dbReference>
<dbReference type="InterPro" id="IPR004497">
    <property type="entry name" value="NDHI"/>
</dbReference>
<dbReference type="NCBIfam" id="TIGR00403">
    <property type="entry name" value="ndhI"/>
    <property type="match status" value="1"/>
</dbReference>
<dbReference type="NCBIfam" id="TIGR01971">
    <property type="entry name" value="NuoI"/>
    <property type="match status" value="1"/>
</dbReference>
<dbReference type="NCBIfam" id="NF004537">
    <property type="entry name" value="PRK05888.1-3"/>
    <property type="match status" value="1"/>
</dbReference>
<dbReference type="PANTHER" id="PTHR47275">
    <property type="entry name" value="NAD(P)H-QUINONE OXIDOREDUCTASE SUBUNIT I, CHLOROPLASTIC"/>
    <property type="match status" value="1"/>
</dbReference>
<dbReference type="PANTHER" id="PTHR47275:SF1">
    <property type="entry name" value="NAD(P)H-QUINONE OXIDOREDUCTASE SUBUNIT I, CHLOROPLASTIC"/>
    <property type="match status" value="1"/>
</dbReference>
<dbReference type="Pfam" id="PF13187">
    <property type="entry name" value="Fer4_9"/>
    <property type="match status" value="1"/>
</dbReference>
<dbReference type="SUPFAM" id="SSF54862">
    <property type="entry name" value="4Fe-4S ferredoxins"/>
    <property type="match status" value="1"/>
</dbReference>
<dbReference type="PROSITE" id="PS00198">
    <property type="entry name" value="4FE4S_FER_1"/>
    <property type="match status" value="2"/>
</dbReference>
<dbReference type="PROSITE" id="PS51379">
    <property type="entry name" value="4FE4S_FER_2"/>
    <property type="match status" value="2"/>
</dbReference>
<name>NDHI_BARVE</name>
<feature type="chain" id="PRO_0000298569" description="NAD(P)H-quinone oxidoreductase subunit I, chloroplastic">
    <location>
        <begin position="1"/>
        <end position="167"/>
    </location>
</feature>
<feature type="domain" description="4Fe-4S ferredoxin-type 1" evidence="1">
    <location>
        <begin position="55"/>
        <end position="84"/>
    </location>
</feature>
<feature type="domain" description="4Fe-4S ferredoxin-type 2" evidence="1">
    <location>
        <begin position="95"/>
        <end position="124"/>
    </location>
</feature>
<feature type="binding site" evidence="1">
    <location>
        <position position="64"/>
    </location>
    <ligand>
        <name>[4Fe-4S] cluster</name>
        <dbReference type="ChEBI" id="CHEBI:49883"/>
        <label>1</label>
    </ligand>
</feature>
<feature type="binding site" evidence="1">
    <location>
        <position position="67"/>
    </location>
    <ligand>
        <name>[4Fe-4S] cluster</name>
        <dbReference type="ChEBI" id="CHEBI:49883"/>
        <label>1</label>
    </ligand>
</feature>
<feature type="binding site" evidence="1">
    <location>
        <position position="70"/>
    </location>
    <ligand>
        <name>[4Fe-4S] cluster</name>
        <dbReference type="ChEBI" id="CHEBI:49883"/>
        <label>1</label>
    </ligand>
</feature>
<feature type="binding site" evidence="1">
    <location>
        <position position="74"/>
    </location>
    <ligand>
        <name>[4Fe-4S] cluster</name>
        <dbReference type="ChEBI" id="CHEBI:49883"/>
        <label>2</label>
    </ligand>
</feature>
<feature type="binding site" evidence="1">
    <location>
        <position position="104"/>
    </location>
    <ligand>
        <name>[4Fe-4S] cluster</name>
        <dbReference type="ChEBI" id="CHEBI:49883"/>
        <label>2</label>
    </ligand>
</feature>
<feature type="binding site" evidence="1">
    <location>
        <position position="107"/>
    </location>
    <ligand>
        <name>[4Fe-4S] cluster</name>
        <dbReference type="ChEBI" id="CHEBI:49883"/>
        <label>2</label>
    </ligand>
</feature>
<feature type="binding site" evidence="1">
    <location>
        <position position="110"/>
    </location>
    <ligand>
        <name>[4Fe-4S] cluster</name>
        <dbReference type="ChEBI" id="CHEBI:49883"/>
        <label>2</label>
    </ligand>
</feature>
<feature type="binding site" evidence="1">
    <location>
        <position position="114"/>
    </location>
    <ligand>
        <name>[4Fe-4S] cluster</name>
        <dbReference type="ChEBI" id="CHEBI:49883"/>
        <label>1</label>
    </ligand>
</feature>
<evidence type="ECO:0000255" key="1">
    <source>
        <dbReference type="HAMAP-Rule" id="MF_01351"/>
    </source>
</evidence>
<comment type="function">
    <text evidence="1">NDH shuttles electrons from NAD(P)H:plastoquinone, via FMN and iron-sulfur (Fe-S) centers, to quinones in the photosynthetic chain and possibly in a chloroplast respiratory chain. The immediate electron acceptor for the enzyme in this species is believed to be plastoquinone. Couples the redox reaction to proton translocation, and thus conserves the redox energy in a proton gradient.</text>
</comment>
<comment type="catalytic activity">
    <reaction evidence="1">
        <text>a plastoquinone + NADH + (n+1) H(+)(in) = a plastoquinol + NAD(+) + n H(+)(out)</text>
        <dbReference type="Rhea" id="RHEA:42608"/>
        <dbReference type="Rhea" id="RHEA-COMP:9561"/>
        <dbReference type="Rhea" id="RHEA-COMP:9562"/>
        <dbReference type="ChEBI" id="CHEBI:15378"/>
        <dbReference type="ChEBI" id="CHEBI:17757"/>
        <dbReference type="ChEBI" id="CHEBI:57540"/>
        <dbReference type="ChEBI" id="CHEBI:57945"/>
        <dbReference type="ChEBI" id="CHEBI:62192"/>
    </reaction>
</comment>
<comment type="catalytic activity">
    <reaction evidence="1">
        <text>a plastoquinone + NADPH + (n+1) H(+)(in) = a plastoquinol + NADP(+) + n H(+)(out)</text>
        <dbReference type="Rhea" id="RHEA:42612"/>
        <dbReference type="Rhea" id="RHEA-COMP:9561"/>
        <dbReference type="Rhea" id="RHEA-COMP:9562"/>
        <dbReference type="ChEBI" id="CHEBI:15378"/>
        <dbReference type="ChEBI" id="CHEBI:17757"/>
        <dbReference type="ChEBI" id="CHEBI:57783"/>
        <dbReference type="ChEBI" id="CHEBI:58349"/>
        <dbReference type="ChEBI" id="CHEBI:62192"/>
    </reaction>
</comment>
<comment type="cofactor">
    <cofactor evidence="1">
        <name>[4Fe-4S] cluster</name>
        <dbReference type="ChEBI" id="CHEBI:49883"/>
    </cofactor>
    <text evidence="1">Binds 2 [4Fe-4S] clusters per subunit.</text>
</comment>
<comment type="subunit">
    <text evidence="1">NDH is composed of at least 16 different subunits, 5 of which are encoded in the nucleus.</text>
</comment>
<comment type="subcellular location">
    <subcellularLocation>
        <location evidence="1">Plastid</location>
        <location evidence="1">Chloroplast thylakoid membrane</location>
        <topology evidence="1">Peripheral membrane protein</topology>
    </subcellularLocation>
</comment>
<comment type="similarity">
    <text evidence="1">Belongs to the complex I 23 kDa subunit family.</text>
</comment>
<geneLocation type="chloroplast"/>
<keyword id="KW-0004">4Fe-4S</keyword>
<keyword id="KW-0150">Chloroplast</keyword>
<keyword id="KW-0408">Iron</keyword>
<keyword id="KW-0411">Iron-sulfur</keyword>
<keyword id="KW-0472">Membrane</keyword>
<keyword id="KW-0479">Metal-binding</keyword>
<keyword id="KW-0520">NAD</keyword>
<keyword id="KW-0521">NADP</keyword>
<keyword id="KW-0934">Plastid</keyword>
<keyword id="KW-0618">Plastoquinone</keyword>
<keyword id="KW-0874">Quinone</keyword>
<keyword id="KW-0677">Repeat</keyword>
<keyword id="KW-0793">Thylakoid</keyword>
<keyword id="KW-1278">Translocase</keyword>